<name>CSPLI_ARALL</name>
<protein>
    <recommendedName>
        <fullName>CASP-like protein 4A3</fullName>
        <shortName>AlCASPL4A3</shortName>
    </recommendedName>
</protein>
<sequence length="276" mass="30743">MPSMSPSSISTEKSPPPSDTSMAIVAFDNSTTHLSSSPSPPHSLDHSSDSEKEDEKRRPESRRNKNPVKIEETPSPIVVVHNHNRSVKEVVPTRKTARVGSGRSSGQRSGAVLAILRRSRREEIVKFVALGFRLSEVVLALISFSIMAADKTKGWSGDSFDRYKEYRFCLSVNVVAFIYASFQACDLAYHLVKEKHLISHHLRPLFEFIIDQVLAYLLMCASTAAVTRVDDWVSNWGKDDFTEMASASIAMSFLTFLAFAFSSLISGYNLFNQDSL</sequence>
<reference key="1">
    <citation type="journal article" date="2011" name="Nat. Genet.">
        <title>The Arabidopsis lyrata genome sequence and the basis of rapid genome size change.</title>
        <authorList>
            <person name="Hu T.T."/>
            <person name="Pattyn P."/>
            <person name="Bakker E.G."/>
            <person name="Cao J."/>
            <person name="Cheng J.-F."/>
            <person name="Clark R.M."/>
            <person name="Fahlgren N."/>
            <person name="Fawcett J.A."/>
            <person name="Grimwood J."/>
            <person name="Gundlach H."/>
            <person name="Haberer G."/>
            <person name="Hollister J.D."/>
            <person name="Ossowski S."/>
            <person name="Ottilar R.P."/>
            <person name="Salamov A.A."/>
            <person name="Schneeberger K."/>
            <person name="Spannagl M."/>
            <person name="Wang X."/>
            <person name="Yang L."/>
            <person name="Nasrallah M.E."/>
            <person name="Bergelson J."/>
            <person name="Carrington J.C."/>
            <person name="Gaut B.S."/>
            <person name="Schmutz J."/>
            <person name="Mayer K.F.X."/>
            <person name="Van de Peer Y."/>
            <person name="Grigoriev I.V."/>
            <person name="Nordborg M."/>
            <person name="Weigel D."/>
            <person name="Guo Y.-L."/>
        </authorList>
    </citation>
    <scope>NUCLEOTIDE SEQUENCE [LARGE SCALE GENOMIC DNA]</scope>
    <source>
        <strain>cv. MN47</strain>
    </source>
</reference>
<reference key="2">
    <citation type="journal article" date="2014" name="Plant Physiol.">
        <title>Functional and evolutionary analysis of the CASPARIAN STRIP MEMBRANE DOMAIN PROTEIN family.</title>
        <authorList>
            <person name="Roppolo D."/>
            <person name="Boeckmann B."/>
            <person name="Pfister A."/>
            <person name="Boutet E."/>
            <person name="Rubio M.C."/>
            <person name="Denervaud-Tendon V."/>
            <person name="Vermeer J.E."/>
            <person name="Gheyselinck J."/>
            <person name="Xenarios I."/>
            <person name="Geldner N."/>
        </authorList>
    </citation>
    <scope>GENE FAMILY</scope>
    <scope>NOMENCLATURE</scope>
</reference>
<dbReference type="EMBL" id="GL348716">
    <property type="protein sequence ID" value="EFH55863.1"/>
    <property type="molecule type" value="Genomic_DNA"/>
</dbReference>
<dbReference type="RefSeq" id="XP_002879604.1">
    <property type="nucleotide sequence ID" value="XM_002879558.1"/>
</dbReference>
<dbReference type="STRING" id="81972.D7LIR2"/>
<dbReference type="EnsemblPlants" id="fgenesh2_kg.4__1667__AT2G36330.1">
    <property type="protein sequence ID" value="fgenesh2_kg.4__1667__AT2G36330.1"/>
    <property type="gene ID" value="fgenesh2_kg.4__1667__AT2G36330.1"/>
</dbReference>
<dbReference type="Gramene" id="fgenesh2_kg.4__1667__AT2G36330.1">
    <property type="protein sequence ID" value="fgenesh2_kg.4__1667__AT2G36330.1"/>
    <property type="gene ID" value="fgenesh2_kg.4__1667__AT2G36330.1"/>
</dbReference>
<dbReference type="eggNOG" id="ENOG502QW75">
    <property type="taxonomic scope" value="Eukaryota"/>
</dbReference>
<dbReference type="HOGENOM" id="CLU_048961_2_0_1"/>
<dbReference type="Proteomes" id="UP000008694">
    <property type="component" value="Unassembled WGS sequence"/>
</dbReference>
<dbReference type="GO" id="GO:0005886">
    <property type="term" value="C:plasma membrane"/>
    <property type="evidence" value="ECO:0007669"/>
    <property type="project" value="UniProtKB-SubCell"/>
</dbReference>
<dbReference type="InterPro" id="IPR006702">
    <property type="entry name" value="CASP_dom"/>
</dbReference>
<dbReference type="PANTHER" id="PTHR33573:SF50">
    <property type="entry name" value="CASP-LIKE PROTEIN 4A3"/>
    <property type="match status" value="1"/>
</dbReference>
<dbReference type="PANTHER" id="PTHR33573">
    <property type="entry name" value="CASP-LIKE PROTEIN 4A4"/>
    <property type="match status" value="1"/>
</dbReference>
<dbReference type="Pfam" id="PF04535">
    <property type="entry name" value="CASP_dom"/>
    <property type="match status" value="1"/>
</dbReference>
<feature type="chain" id="PRO_0000417758" description="CASP-like protein 4A3">
    <location>
        <begin position="1"/>
        <end position="276"/>
    </location>
</feature>
<feature type="topological domain" description="Cytoplasmic" evidence="2">
    <location>
        <begin position="1"/>
        <end position="126"/>
    </location>
</feature>
<feature type="transmembrane region" description="Helical" evidence="2">
    <location>
        <begin position="127"/>
        <end position="147"/>
    </location>
</feature>
<feature type="topological domain" description="Extracellular" evidence="2">
    <location>
        <begin position="148"/>
        <end position="167"/>
    </location>
</feature>
<feature type="transmembrane region" description="Helical" evidence="2">
    <location>
        <begin position="168"/>
        <end position="188"/>
    </location>
</feature>
<feature type="topological domain" description="Cytoplasmic" evidence="2">
    <location>
        <begin position="189"/>
        <end position="205"/>
    </location>
</feature>
<feature type="transmembrane region" description="Helical" evidence="2">
    <location>
        <begin position="206"/>
        <end position="226"/>
    </location>
</feature>
<feature type="topological domain" description="Extracellular" evidence="2">
    <location>
        <begin position="227"/>
        <end position="244"/>
    </location>
</feature>
<feature type="transmembrane region" description="Helical" evidence="2">
    <location>
        <begin position="245"/>
        <end position="265"/>
    </location>
</feature>
<feature type="topological domain" description="Cytoplasmic" evidence="2">
    <location>
        <begin position="266"/>
        <end position="276"/>
    </location>
</feature>
<feature type="region of interest" description="Disordered" evidence="3">
    <location>
        <begin position="1"/>
        <end position="76"/>
    </location>
</feature>
<feature type="compositionally biased region" description="Polar residues" evidence="3">
    <location>
        <begin position="1"/>
        <end position="13"/>
    </location>
</feature>
<feature type="compositionally biased region" description="Basic and acidic residues" evidence="3">
    <location>
        <begin position="43"/>
        <end position="72"/>
    </location>
</feature>
<evidence type="ECO:0000250" key="1"/>
<evidence type="ECO:0000255" key="2"/>
<evidence type="ECO:0000256" key="3">
    <source>
        <dbReference type="SAM" id="MobiDB-lite"/>
    </source>
</evidence>
<evidence type="ECO:0000305" key="4"/>
<proteinExistence type="inferred from homology"/>
<keyword id="KW-1003">Cell membrane</keyword>
<keyword id="KW-0472">Membrane</keyword>
<keyword id="KW-1185">Reference proteome</keyword>
<keyword id="KW-0812">Transmembrane</keyword>
<keyword id="KW-1133">Transmembrane helix</keyword>
<accession>D7LIR2</accession>
<comment type="subunit">
    <text evidence="1">Homodimer and heterodimers.</text>
</comment>
<comment type="subcellular location">
    <subcellularLocation>
        <location evidence="1">Cell membrane</location>
        <topology evidence="1">Multi-pass membrane protein</topology>
    </subcellularLocation>
</comment>
<comment type="similarity">
    <text evidence="4">Belongs to the Casparian strip membrane proteins (CASP) family.</text>
</comment>
<gene>
    <name type="ORF">ARALYDRAFT_482607</name>
</gene>
<organism>
    <name type="scientific">Arabidopsis lyrata subsp. lyrata</name>
    <name type="common">Lyre-leaved rock-cress</name>
    <dbReference type="NCBI Taxonomy" id="81972"/>
    <lineage>
        <taxon>Eukaryota</taxon>
        <taxon>Viridiplantae</taxon>
        <taxon>Streptophyta</taxon>
        <taxon>Embryophyta</taxon>
        <taxon>Tracheophyta</taxon>
        <taxon>Spermatophyta</taxon>
        <taxon>Magnoliopsida</taxon>
        <taxon>eudicotyledons</taxon>
        <taxon>Gunneridae</taxon>
        <taxon>Pentapetalae</taxon>
        <taxon>rosids</taxon>
        <taxon>malvids</taxon>
        <taxon>Brassicales</taxon>
        <taxon>Brassicaceae</taxon>
        <taxon>Camelineae</taxon>
        <taxon>Arabidopsis</taxon>
    </lineage>
</organism>